<reference evidence="3" key="1">
    <citation type="journal article" date="2001" name="Mol. Biol. Evol.">
        <title>Molecular evolution of the ocnus and janus genes in the Drosophila melanogaster species subgroup.</title>
        <authorList>
            <person name="Parsch J."/>
            <person name="Meiklejohn C.D."/>
            <person name="Hauschteck-Jungen E."/>
            <person name="Hunziker P."/>
            <person name="Hartl D.L."/>
        </authorList>
    </citation>
    <scope>NUCLEOTIDE SEQUENCE [GENOMIC DNA]</scope>
</reference>
<keyword id="KW-0221">Differentiation</keyword>
<keyword id="KW-0726">Sexual differentiation</keyword>
<feature type="chain" id="PRO_0000206171" description="Sex-regulated protein janus-B">
    <location>
        <begin position="1"/>
        <end position="140"/>
    </location>
</feature>
<feature type="active site" description="Proton acceptor" evidence="1">
    <location>
        <position position="69"/>
    </location>
</feature>
<feature type="binding site" evidence="1">
    <location>
        <position position="42"/>
    </location>
    <ligand>
        <name>substrate</name>
    </ligand>
</feature>
<feature type="binding site" evidence="1">
    <location>
        <begin position="110"/>
        <end position="112"/>
    </location>
    <ligand>
        <name>substrate</name>
    </ligand>
</feature>
<dbReference type="EMBL" id="AY013349">
    <property type="protein sequence ID" value="AAG50370.1"/>
    <property type="molecule type" value="Genomic_DNA"/>
</dbReference>
<dbReference type="SMR" id="Q9BM91"/>
<dbReference type="GO" id="GO:0005829">
    <property type="term" value="C:cytosol"/>
    <property type="evidence" value="ECO:0007669"/>
    <property type="project" value="TreeGrafter"/>
</dbReference>
<dbReference type="GO" id="GO:0101006">
    <property type="term" value="F:protein histidine phosphatase activity"/>
    <property type="evidence" value="ECO:0007669"/>
    <property type="project" value="TreeGrafter"/>
</dbReference>
<dbReference type="GO" id="GO:0030154">
    <property type="term" value="P:cell differentiation"/>
    <property type="evidence" value="ECO:0007669"/>
    <property type="project" value="UniProtKB-KW"/>
</dbReference>
<dbReference type="GO" id="GO:0007548">
    <property type="term" value="P:sex differentiation"/>
    <property type="evidence" value="ECO:0000250"/>
    <property type="project" value="UniProtKB"/>
</dbReference>
<dbReference type="FunFam" id="3.50.20.20:FF:000002">
    <property type="entry name" value="Sex-regulated protein janus-B"/>
    <property type="match status" value="1"/>
</dbReference>
<dbReference type="Gene3D" id="3.50.20.20">
    <property type="entry name" value="Janus/Ocnus"/>
    <property type="match status" value="1"/>
</dbReference>
<dbReference type="InterPro" id="IPR007702">
    <property type="entry name" value="Janus"/>
</dbReference>
<dbReference type="InterPro" id="IPR038596">
    <property type="entry name" value="Janus_sf"/>
</dbReference>
<dbReference type="PANTHER" id="PTHR12258:SF5">
    <property type="entry name" value="BCDNA.GH02250-RELATED"/>
    <property type="match status" value="1"/>
</dbReference>
<dbReference type="PANTHER" id="PTHR12258">
    <property type="entry name" value="JANUS-A/JANUS-B"/>
    <property type="match status" value="1"/>
</dbReference>
<dbReference type="Pfam" id="PF05005">
    <property type="entry name" value="Ocnus"/>
    <property type="match status" value="1"/>
</dbReference>
<dbReference type="SUPFAM" id="SSF143724">
    <property type="entry name" value="PHP14-like"/>
    <property type="match status" value="1"/>
</dbReference>
<gene>
    <name type="primary">janB</name>
</gene>
<sequence>MKMFKSLSLLPRIVSPFQKCYSTDLISLVGIPRVKITKGQNRYLLVNIHTHGFTKYGRVIVRGADVDNHLTVFDSILEELEPQGICAKILGGGRILNEADSKKIKIYGTSRTFGSADHTRTRNILHSWTTYKDFKITVKN</sequence>
<proteinExistence type="inferred from homology"/>
<accession>Q9BM91</accession>
<organism evidence="3">
    <name type="scientific">Drosophila teissieri</name>
    <name type="common">Fruit fly</name>
    <dbReference type="NCBI Taxonomy" id="7243"/>
    <lineage>
        <taxon>Eukaryota</taxon>
        <taxon>Metazoa</taxon>
        <taxon>Ecdysozoa</taxon>
        <taxon>Arthropoda</taxon>
        <taxon>Hexapoda</taxon>
        <taxon>Insecta</taxon>
        <taxon>Pterygota</taxon>
        <taxon>Neoptera</taxon>
        <taxon>Endopterygota</taxon>
        <taxon>Diptera</taxon>
        <taxon>Brachycera</taxon>
        <taxon>Muscomorpha</taxon>
        <taxon>Ephydroidea</taxon>
        <taxon>Drosophilidae</taxon>
        <taxon>Drosophila</taxon>
        <taxon>Sophophora</taxon>
    </lineage>
</organism>
<name>JANB_DROTE</name>
<protein>
    <recommendedName>
        <fullName>Sex-regulated protein janus-B</fullName>
    </recommendedName>
</protein>
<evidence type="ECO:0000250" key="1"/>
<evidence type="ECO:0000305" key="2"/>
<evidence type="ECO:0000312" key="3">
    <source>
        <dbReference type="EMBL" id="AAG50370.1"/>
    </source>
</evidence>
<comment type="function">
    <text evidence="1">JanA and janB regulate somatic sex differentiation.</text>
</comment>
<comment type="similarity">
    <text evidence="2">Belongs to the janus family.</text>
</comment>